<proteinExistence type="inferred from homology"/>
<gene>
    <name evidence="1" type="primary">plsB</name>
    <name type="ordered locus">APP7_1164</name>
</gene>
<reference key="1">
    <citation type="submission" date="2008-06" db="EMBL/GenBank/DDBJ databases">
        <title>Genome and proteome analysis of A. pleuropneumoniae serotype 7.</title>
        <authorList>
            <person name="Linke B."/>
            <person name="Buettner F."/>
            <person name="Martinez-Arias R."/>
            <person name="Goesmann A."/>
            <person name="Baltes N."/>
            <person name="Tegetmeyer H."/>
            <person name="Singh M."/>
            <person name="Gerlach G.F."/>
        </authorList>
    </citation>
    <scope>NUCLEOTIDE SEQUENCE [LARGE SCALE GENOMIC DNA]</scope>
    <source>
        <strain>AP76</strain>
    </source>
</reference>
<name>PLSB_ACTP7</name>
<protein>
    <recommendedName>
        <fullName evidence="1">Glycerol-3-phosphate acyltransferase</fullName>
        <shortName evidence="1">GPAT</shortName>
        <ecNumber evidence="1">2.3.1.15</ecNumber>
    </recommendedName>
</protein>
<evidence type="ECO:0000255" key="1">
    <source>
        <dbReference type="HAMAP-Rule" id="MF_00393"/>
    </source>
</evidence>
<organism>
    <name type="scientific">Actinobacillus pleuropneumoniae serotype 7 (strain AP76)</name>
    <dbReference type="NCBI Taxonomy" id="537457"/>
    <lineage>
        <taxon>Bacteria</taxon>
        <taxon>Pseudomonadati</taxon>
        <taxon>Pseudomonadota</taxon>
        <taxon>Gammaproteobacteria</taxon>
        <taxon>Pasteurellales</taxon>
        <taxon>Pasteurellaceae</taxon>
        <taxon>Actinobacillus</taxon>
    </lineage>
</organism>
<sequence>MSSLLNFYRKVLNVPLSLLVKSRAIPTDPVKELNLNLEQPIIYVLPYTSQTDLLILQKNCLALNLPDPLQNNELNGQSLPRYVFLDEGRRFFKSKGAKSETESIFYRYLDLHRNNESLDVQLIPASVLWGRSPGKESEPHLRLMSSFQRIISMIWFGRDNFVRFSQALSLKYMVAEHGADEGIAQKLARVAKIHFAKQRYSAMGPRLPDRQAMFNKIIQSPAIKAAIEEEAKTKKISIEKARQEAEKIVNEIAADVSHESLRIADRVLSWLWNKLYQGINVQNGDRVRKLALEGHEIVYVPCHRSHMDYLLLSYLLYHQGLVPPHIAAGINLNFFPAGPIFRSWGAFFIRRTFKGNRLYSTIFREYLAELFYRGYSVEYFIEGGRSRTGRLLEPKTGMMSMTLQALQRGLTRPISIVPVYIGYEHVLEVDTYAKELRGAEKEKENAGLVLRVIKKLKNLGQCYVNFAEPIQVNNYLNQHFPEWKESQAEDSRPKWLNEAVDSVAHQVMININKAAAINAKNLIGSVLLASRQRALAREQLIEQVDSYLQLFKNVSYSDDVIVPNDSAEEMLNHVLTLPRSGVISEKDSFGEMIRLDRESAVLMTYYRNNIQHLFVLPSLVASIILHHESVSKDLIIKTVNRIYPFLKAELFLHFEENDVRNQVEAILTEFSAQRIVKYESDVLQINRARVRALQLHAAGVREILQRYYISLSILLEHPEISRAALEKESRSIAQRLSILHGINAPEFFDKALFSTFSASLKAQGYFDSEGNCILEKAKEAEEILRSLISVEVQLTIQGAMEKVEEVENTETVVKTAEAVTEKNE</sequence>
<feature type="chain" id="PRO_1000123071" description="Glycerol-3-phosphate acyltransferase">
    <location>
        <begin position="1"/>
        <end position="824"/>
    </location>
</feature>
<feature type="short sequence motif" description="HXXXXD motif">
    <location>
        <begin position="302"/>
        <end position="307"/>
    </location>
</feature>
<accession>B3GXZ3</accession>
<comment type="catalytic activity">
    <reaction evidence="1">
        <text>sn-glycerol 3-phosphate + an acyl-CoA = a 1-acyl-sn-glycero-3-phosphate + CoA</text>
        <dbReference type="Rhea" id="RHEA:15325"/>
        <dbReference type="ChEBI" id="CHEBI:57287"/>
        <dbReference type="ChEBI" id="CHEBI:57597"/>
        <dbReference type="ChEBI" id="CHEBI:57970"/>
        <dbReference type="ChEBI" id="CHEBI:58342"/>
        <dbReference type="EC" id="2.3.1.15"/>
    </reaction>
</comment>
<comment type="pathway">
    <text evidence="1">Phospholipid metabolism; CDP-diacylglycerol biosynthesis; CDP-diacylglycerol from sn-glycerol 3-phosphate: step 1/3.</text>
</comment>
<comment type="subcellular location">
    <subcellularLocation>
        <location evidence="1">Cell inner membrane</location>
        <topology evidence="1">Peripheral membrane protein</topology>
        <orientation evidence="1">Cytoplasmic side</orientation>
    </subcellularLocation>
</comment>
<comment type="domain">
    <text evidence="1">The HXXXXD motif is essential for acyltransferase activity and may constitute the binding site for the phosphate moiety of the glycerol-3-phosphate.</text>
</comment>
<comment type="similarity">
    <text evidence="1">Belongs to the GPAT/DAPAT family.</text>
</comment>
<keyword id="KW-0012">Acyltransferase</keyword>
<keyword id="KW-0997">Cell inner membrane</keyword>
<keyword id="KW-1003">Cell membrane</keyword>
<keyword id="KW-0444">Lipid biosynthesis</keyword>
<keyword id="KW-0443">Lipid metabolism</keyword>
<keyword id="KW-0472">Membrane</keyword>
<keyword id="KW-0594">Phospholipid biosynthesis</keyword>
<keyword id="KW-1208">Phospholipid metabolism</keyword>
<keyword id="KW-0808">Transferase</keyword>
<dbReference type="EC" id="2.3.1.15" evidence="1"/>
<dbReference type="EMBL" id="CP001091">
    <property type="protein sequence ID" value="ACE61816.1"/>
    <property type="molecule type" value="Genomic_DNA"/>
</dbReference>
<dbReference type="RefSeq" id="WP_005617596.1">
    <property type="nucleotide sequence ID" value="NC_010939.1"/>
</dbReference>
<dbReference type="SMR" id="B3GXZ3"/>
<dbReference type="KEGG" id="apa:APP7_1164"/>
<dbReference type="HOGENOM" id="CLU_015407_0_0_6"/>
<dbReference type="UniPathway" id="UPA00557">
    <property type="reaction ID" value="UER00612"/>
</dbReference>
<dbReference type="Proteomes" id="UP000001226">
    <property type="component" value="Chromosome"/>
</dbReference>
<dbReference type="GO" id="GO:0005886">
    <property type="term" value="C:plasma membrane"/>
    <property type="evidence" value="ECO:0007669"/>
    <property type="project" value="UniProtKB-SubCell"/>
</dbReference>
<dbReference type="GO" id="GO:0004366">
    <property type="term" value="F:glycerol-3-phosphate O-acyltransferase activity"/>
    <property type="evidence" value="ECO:0007669"/>
    <property type="project" value="UniProtKB-UniRule"/>
</dbReference>
<dbReference type="GO" id="GO:0016024">
    <property type="term" value="P:CDP-diacylglycerol biosynthetic process"/>
    <property type="evidence" value="ECO:0007669"/>
    <property type="project" value="UniProtKB-UniRule"/>
</dbReference>
<dbReference type="GO" id="GO:0006631">
    <property type="term" value="P:fatty acid metabolic process"/>
    <property type="evidence" value="ECO:0007669"/>
    <property type="project" value="TreeGrafter"/>
</dbReference>
<dbReference type="CDD" id="cd07993">
    <property type="entry name" value="LPLAT_DHAPAT-like"/>
    <property type="match status" value="1"/>
</dbReference>
<dbReference type="HAMAP" id="MF_00393">
    <property type="entry name" value="Glyc3P_acyltrans"/>
    <property type="match status" value="1"/>
</dbReference>
<dbReference type="InterPro" id="IPR022284">
    <property type="entry name" value="GPAT/DHAPAT"/>
</dbReference>
<dbReference type="InterPro" id="IPR045520">
    <property type="entry name" value="GPAT/DHAPAT_C"/>
</dbReference>
<dbReference type="InterPro" id="IPR041728">
    <property type="entry name" value="GPAT/DHAPAT_LPLAT"/>
</dbReference>
<dbReference type="InterPro" id="IPR028354">
    <property type="entry name" value="GPAT_PlsB"/>
</dbReference>
<dbReference type="InterPro" id="IPR002123">
    <property type="entry name" value="Plipid/glycerol_acylTrfase"/>
</dbReference>
<dbReference type="NCBIfam" id="TIGR03703">
    <property type="entry name" value="plsB"/>
    <property type="match status" value="1"/>
</dbReference>
<dbReference type="NCBIfam" id="NF003441">
    <property type="entry name" value="PRK04974.1"/>
    <property type="match status" value="1"/>
</dbReference>
<dbReference type="PANTHER" id="PTHR12563:SF17">
    <property type="entry name" value="DIHYDROXYACETONE PHOSPHATE ACYLTRANSFERASE"/>
    <property type="match status" value="1"/>
</dbReference>
<dbReference type="PANTHER" id="PTHR12563">
    <property type="entry name" value="GLYCEROL-3-PHOSPHATE ACYLTRANSFERASE"/>
    <property type="match status" value="1"/>
</dbReference>
<dbReference type="Pfam" id="PF01553">
    <property type="entry name" value="Acyltransferase"/>
    <property type="match status" value="1"/>
</dbReference>
<dbReference type="Pfam" id="PF19277">
    <property type="entry name" value="GPAT_C"/>
    <property type="match status" value="1"/>
</dbReference>
<dbReference type="PIRSF" id="PIRSF500064">
    <property type="entry name" value="GPAT"/>
    <property type="match status" value="1"/>
</dbReference>
<dbReference type="PIRSF" id="PIRSF000437">
    <property type="entry name" value="GPAT_DHAPAT"/>
    <property type="match status" value="1"/>
</dbReference>
<dbReference type="SMART" id="SM00563">
    <property type="entry name" value="PlsC"/>
    <property type="match status" value="1"/>
</dbReference>
<dbReference type="SUPFAM" id="SSF69593">
    <property type="entry name" value="Glycerol-3-phosphate (1)-acyltransferase"/>
    <property type="match status" value="1"/>
</dbReference>